<reference key="1">
    <citation type="submission" date="2005-06" db="EMBL/GenBank/DDBJ databases">
        <title>DNA sequences of macaque genes expressed in brain or testis and its evolutionary implications.</title>
        <authorList>
            <consortium name="International consortium for macaque cDNA sequencing and analysis"/>
        </authorList>
    </citation>
    <scope>NUCLEOTIDE SEQUENCE [LARGE SCALE MRNA]</scope>
    <source>
        <tissue>Testis</tissue>
    </source>
</reference>
<organism>
    <name type="scientific">Macaca fascicularis</name>
    <name type="common">Crab-eating macaque</name>
    <name type="synonym">Cynomolgus monkey</name>
    <dbReference type="NCBI Taxonomy" id="9541"/>
    <lineage>
        <taxon>Eukaryota</taxon>
        <taxon>Metazoa</taxon>
        <taxon>Chordata</taxon>
        <taxon>Craniata</taxon>
        <taxon>Vertebrata</taxon>
        <taxon>Euteleostomi</taxon>
        <taxon>Mammalia</taxon>
        <taxon>Eutheria</taxon>
        <taxon>Euarchontoglires</taxon>
        <taxon>Primates</taxon>
        <taxon>Haplorrhini</taxon>
        <taxon>Catarrhini</taxon>
        <taxon>Cercopithecidae</taxon>
        <taxon>Cercopithecinae</taxon>
        <taxon>Macaca</taxon>
    </lineage>
</organism>
<keyword id="KW-0433">Leucine-rich repeat</keyword>
<keyword id="KW-0597">Phosphoprotein</keyword>
<keyword id="KW-1185">Reference proteome</keyword>
<keyword id="KW-0677">Repeat</keyword>
<protein>
    <recommendedName>
        <fullName>Leucine-rich repeat-containing protein 40</fullName>
    </recommendedName>
</protein>
<dbReference type="EMBL" id="AB179219">
    <property type="protein sequence ID" value="BAE02270.1"/>
    <property type="molecule type" value="mRNA"/>
</dbReference>
<dbReference type="RefSeq" id="NP_001271645.1">
    <property type="nucleotide sequence ID" value="NM_001284716.1"/>
</dbReference>
<dbReference type="SMR" id="Q4R3P6"/>
<dbReference type="STRING" id="9541.ENSMFAP00000013247"/>
<dbReference type="eggNOG" id="KOG0472">
    <property type="taxonomic scope" value="Eukaryota"/>
</dbReference>
<dbReference type="Proteomes" id="UP000233100">
    <property type="component" value="Unplaced"/>
</dbReference>
<dbReference type="GO" id="GO:0005737">
    <property type="term" value="C:cytoplasm"/>
    <property type="evidence" value="ECO:0007669"/>
    <property type="project" value="TreeGrafter"/>
</dbReference>
<dbReference type="FunFam" id="3.80.10.10:FF:000116">
    <property type="entry name" value="Leucine-rich repeat-containing protein 40"/>
    <property type="match status" value="1"/>
</dbReference>
<dbReference type="FunFam" id="3.80.10.10:FF:000193">
    <property type="entry name" value="Leucine-rich repeat-containing protein 40"/>
    <property type="match status" value="1"/>
</dbReference>
<dbReference type="FunFam" id="3.80.10.10:FF:000265">
    <property type="entry name" value="Leucine-rich repeat-containing protein 40"/>
    <property type="match status" value="1"/>
</dbReference>
<dbReference type="FunFam" id="3.80.10.10:FF:000206">
    <property type="entry name" value="leucine-rich repeat-containing protein 40"/>
    <property type="match status" value="1"/>
</dbReference>
<dbReference type="Gene3D" id="3.80.10.10">
    <property type="entry name" value="Ribonuclease Inhibitor"/>
    <property type="match status" value="4"/>
</dbReference>
<dbReference type="InterPro" id="IPR001611">
    <property type="entry name" value="Leu-rich_rpt"/>
</dbReference>
<dbReference type="InterPro" id="IPR003591">
    <property type="entry name" value="Leu-rich_rpt_typical-subtyp"/>
</dbReference>
<dbReference type="InterPro" id="IPR032675">
    <property type="entry name" value="LRR_dom_sf"/>
</dbReference>
<dbReference type="InterPro" id="IPR050216">
    <property type="entry name" value="LRR_domain-containing"/>
</dbReference>
<dbReference type="PANTHER" id="PTHR48051">
    <property type="match status" value="1"/>
</dbReference>
<dbReference type="PANTHER" id="PTHR48051:SF1">
    <property type="entry name" value="RAS SUPPRESSOR PROTEIN 1"/>
    <property type="match status" value="1"/>
</dbReference>
<dbReference type="Pfam" id="PF13855">
    <property type="entry name" value="LRR_8"/>
    <property type="match status" value="4"/>
</dbReference>
<dbReference type="PRINTS" id="PR00019">
    <property type="entry name" value="LEURICHRPT"/>
</dbReference>
<dbReference type="SMART" id="SM00364">
    <property type="entry name" value="LRR_BAC"/>
    <property type="match status" value="11"/>
</dbReference>
<dbReference type="SMART" id="SM00365">
    <property type="entry name" value="LRR_SD22"/>
    <property type="match status" value="5"/>
</dbReference>
<dbReference type="SMART" id="SM00369">
    <property type="entry name" value="LRR_TYP"/>
    <property type="match status" value="13"/>
</dbReference>
<dbReference type="SUPFAM" id="SSF52058">
    <property type="entry name" value="L domain-like"/>
    <property type="match status" value="2"/>
</dbReference>
<dbReference type="PROSITE" id="PS51450">
    <property type="entry name" value="LRR"/>
    <property type="match status" value="16"/>
</dbReference>
<feature type="chain" id="PRO_0000226258" description="Leucine-rich repeat-containing protein 40">
    <location>
        <begin position="1"/>
        <end position="602"/>
    </location>
</feature>
<feature type="repeat" description="LRR 1">
    <location>
        <begin position="83"/>
        <end position="104"/>
    </location>
</feature>
<feature type="repeat" description="LRR 2">
    <location>
        <begin position="106"/>
        <end position="127"/>
    </location>
</feature>
<feature type="repeat" description="LRR 3">
    <location>
        <begin position="129"/>
        <end position="150"/>
    </location>
</feature>
<feature type="repeat" description="LRR 4">
    <location>
        <begin position="152"/>
        <end position="173"/>
    </location>
</feature>
<feature type="repeat" description="LRR 5">
    <location>
        <begin position="175"/>
        <end position="196"/>
    </location>
</feature>
<feature type="repeat" description="LRR 6">
    <location>
        <begin position="198"/>
        <end position="219"/>
    </location>
</feature>
<feature type="repeat" description="LRR 7">
    <location>
        <begin position="221"/>
        <end position="242"/>
    </location>
</feature>
<feature type="repeat" description="LRR 8">
    <location>
        <begin position="244"/>
        <end position="265"/>
    </location>
</feature>
<feature type="repeat" description="LRR 9">
    <location>
        <begin position="266"/>
        <end position="286"/>
    </location>
</feature>
<feature type="repeat" description="LRR 10">
    <location>
        <begin position="290"/>
        <end position="311"/>
    </location>
</feature>
<feature type="repeat" description="LRR 11">
    <location>
        <begin position="313"/>
        <end position="335"/>
    </location>
</feature>
<feature type="repeat" description="LRR 12">
    <location>
        <begin position="336"/>
        <end position="356"/>
    </location>
</feature>
<feature type="repeat" description="LRR 13">
    <location>
        <begin position="400"/>
        <end position="421"/>
    </location>
</feature>
<feature type="repeat" description="LRR 14">
    <location>
        <begin position="426"/>
        <end position="447"/>
    </location>
</feature>
<feature type="repeat" description="LRR 15">
    <location>
        <begin position="450"/>
        <end position="471"/>
    </location>
</feature>
<feature type="repeat" description="LRR 16">
    <location>
        <begin position="473"/>
        <end position="494"/>
    </location>
</feature>
<feature type="repeat" description="LRR 17">
    <location>
        <begin position="496"/>
        <end position="517"/>
    </location>
</feature>
<feature type="repeat" description="LRR 18">
    <location>
        <begin position="519"/>
        <end position="540"/>
    </location>
</feature>
<feature type="repeat" description="LRR 19">
    <location>
        <begin position="543"/>
        <end position="564"/>
    </location>
</feature>
<feature type="repeat" description="LRR 20">
    <location>
        <begin position="566"/>
        <end position="586"/>
    </location>
</feature>
<feature type="region of interest" description="Disordered" evidence="2">
    <location>
        <begin position="1"/>
        <end position="20"/>
    </location>
</feature>
<feature type="modified residue" description="Phosphoserine" evidence="1">
    <location>
        <position position="71"/>
    </location>
</feature>
<name>LRC40_MACFA</name>
<evidence type="ECO:0000250" key="1">
    <source>
        <dbReference type="UniProtKB" id="Q9H9A6"/>
    </source>
</evidence>
<evidence type="ECO:0000256" key="2">
    <source>
        <dbReference type="SAM" id="MobiDB-lite"/>
    </source>
</evidence>
<sequence>MSRLKRIAGQDPRAGFKAAGRDCGTSVPQGLLKAARKSGQLNLSGRNLSEVPQCVWRINVDIPEEANQNLSFGATERWWEQTDLTKLIISNNKLQSLTDDLRLLPALTVLDIHDNQLTSLPSAMRELENLQKLNVSHNKLKIFPEEITNLRNLKCLYLQHNELTCISEGFEQLSNLEDLDLSNNRLTTVPASFSSLSSLVRLNLSSNQLKSLPAEINRMKRLKHLDCNSNLLETIPPELAGMESLELLYLRRNKLRFLPEFPSCSLLKELHVGENQIEMLEAEHLKHLNSILVLDLRDNKLKSVPDEIILLQSLERLDLSNNDISSLPYSLGNLHLKFLALEGNPLRTIRREIINKGTQEVLKYLRSKIKDDGPSQSESAAETAMTLPSESRVNIHAIITLKILDYSDKQATLIPDEVFNAVKSNIITSINFSKNQLCEIPKRMVELKEMVSDVNLSFNKLSFISLELCMLQKLTFLDLRNNFLNSLPEEMESLVRLQTINLSFNRFKMLPEVLYRIFTLETILISNNQVGSVDPQKMKMMENLTTLDLQNNDLLQIPPELGNCVNLRTLLLDGNPFRVPRAAILIKGTAAILEYLRDRIPT</sequence>
<gene>
    <name type="primary">LRRC40</name>
    <name type="ORF">QtsA-15446</name>
</gene>
<accession>Q4R3P6</accession>
<proteinExistence type="evidence at transcript level"/>